<proteinExistence type="inferred from homology"/>
<sequence>MPIYQLALPRSVLPRCRAVRYSRLLHSARCYSQDSQPKPGNTILQQLRKKLEPFCNSTKDKLEQTCAQVRYSSMQLRYHLEKARASVQEANKKLVQQEREGENSMLTFNDDLENKSKIVDLPSERERKRRQWSRKLEFYIDSLQETIFTATKALNDVTGYSSIEKLRKSIDMMETQLQETKRKLMQLREAHSDAVAVRNQSQRQVNELLQRKHMWSPGDLESFTRLYKEDADNVRRQEEANASLKAMEAKEEELSNSLHRAILTRYHEEQIWSDKIRRTSTWGTFILMGLNILLFLVVQLLLEPWKRRRLTNSFEDKVKRALEDHSLQHNLVLDRLSDRISEKIDAEMVHGIAPVPLPERTEQPEQPPAATTSGQPLGLREALASVGAAIAAEFGFFQAWIADHVRAIGGPTLSALQGFSGWPVLHIDLYNTVIFTCGMLLGLLVSH</sequence>
<protein>
    <recommendedName>
        <fullName>Sensitive to high expression protein 9 homolog, mitochondrial</fullName>
    </recommendedName>
</protein>
<dbReference type="EMBL" id="AE016819">
    <property type="protein sequence ID" value="AAS53764.1"/>
    <property type="molecule type" value="Genomic_DNA"/>
</dbReference>
<dbReference type="RefSeq" id="NP_985940.1">
    <property type="nucleotide sequence ID" value="NM_211295.1"/>
</dbReference>
<dbReference type="SMR" id="Q753C3"/>
<dbReference type="FunCoup" id="Q753C3">
    <property type="interactions" value="59"/>
</dbReference>
<dbReference type="STRING" id="284811.Q753C3"/>
<dbReference type="EnsemblFungi" id="AAS53764">
    <property type="protein sequence ID" value="AAS53764"/>
    <property type="gene ID" value="AGOS_AFR393W"/>
</dbReference>
<dbReference type="GeneID" id="4622212"/>
<dbReference type="KEGG" id="ago:AGOS_AFR393W"/>
<dbReference type="eggNOG" id="ENOG502QQ1E">
    <property type="taxonomic scope" value="Eukaryota"/>
</dbReference>
<dbReference type="HOGENOM" id="CLU_025632_5_1_1"/>
<dbReference type="InParanoid" id="Q753C3"/>
<dbReference type="OMA" id="ENIELQW"/>
<dbReference type="OrthoDB" id="5595506at2759"/>
<dbReference type="Proteomes" id="UP000000591">
    <property type="component" value="Chromosome VI"/>
</dbReference>
<dbReference type="GO" id="GO:0005743">
    <property type="term" value="C:mitochondrial inner membrane"/>
    <property type="evidence" value="ECO:0000318"/>
    <property type="project" value="GO_Central"/>
</dbReference>
<dbReference type="GO" id="GO:0007007">
    <property type="term" value="P:inner mitochondrial membrane organization"/>
    <property type="evidence" value="ECO:0000318"/>
    <property type="project" value="GO_Central"/>
</dbReference>
<dbReference type="InterPro" id="IPR008839">
    <property type="entry name" value="MDM33_fungi"/>
</dbReference>
<dbReference type="PANTHER" id="PTHR31961">
    <property type="entry name" value="SENSITIVE TO HIGH EXPRESSION PROTEIN 9, MITOCHONDRIAL"/>
    <property type="match status" value="1"/>
</dbReference>
<dbReference type="PANTHER" id="PTHR31961:SF3">
    <property type="entry name" value="SENSITIVE TO HIGH EXPRESSION PROTEIN 9, MITOCHONDRIAL"/>
    <property type="match status" value="1"/>
</dbReference>
<dbReference type="Pfam" id="PF05546">
    <property type="entry name" value="She9_MDM33"/>
    <property type="match status" value="1"/>
</dbReference>
<accession>Q753C3</accession>
<organism>
    <name type="scientific">Eremothecium gossypii (strain ATCC 10895 / CBS 109.51 / FGSC 9923 / NRRL Y-1056)</name>
    <name type="common">Yeast</name>
    <name type="synonym">Ashbya gossypii</name>
    <dbReference type="NCBI Taxonomy" id="284811"/>
    <lineage>
        <taxon>Eukaryota</taxon>
        <taxon>Fungi</taxon>
        <taxon>Dikarya</taxon>
        <taxon>Ascomycota</taxon>
        <taxon>Saccharomycotina</taxon>
        <taxon>Saccharomycetes</taxon>
        <taxon>Saccharomycetales</taxon>
        <taxon>Saccharomycetaceae</taxon>
        <taxon>Eremothecium</taxon>
    </lineage>
</organism>
<comment type="function">
    <text evidence="1">Required for the maintenance of the structure of the mitochondrial inner membrane. Involved in mitochondrial morphology. Causes growth arrest when highly overexpressed (By similarity).</text>
</comment>
<comment type="subunit">
    <text evidence="1">Homooligomer.</text>
</comment>
<comment type="subcellular location">
    <subcellularLocation>
        <location evidence="1">Mitochondrion inner membrane</location>
        <topology evidence="1">Multi-pass membrane protein</topology>
    </subcellularLocation>
</comment>
<comment type="similarity">
    <text evidence="3">Belongs to the SHE9 family.</text>
</comment>
<gene>
    <name type="primary">SHE9</name>
    <name type="ordered locus">AFR393W</name>
</gene>
<evidence type="ECO:0000250" key="1"/>
<evidence type="ECO:0000255" key="2"/>
<evidence type="ECO:0000305" key="3"/>
<feature type="transit peptide" description="Mitochondrion" evidence="2">
    <location>
        <begin position="1"/>
        <end status="unknown"/>
    </location>
</feature>
<feature type="chain" id="PRO_0000351046" description="Sensitive to high expression protein 9 homolog, mitochondrial">
    <location>
        <begin status="unknown"/>
        <end position="447"/>
    </location>
</feature>
<feature type="topological domain" description="Mitochondrial matrix" evidence="2">
    <location>
        <begin status="unknown"/>
        <end position="281"/>
    </location>
</feature>
<feature type="transmembrane region" description="Helical" evidence="2">
    <location>
        <begin position="282"/>
        <end position="302"/>
    </location>
</feature>
<feature type="topological domain" description="Mitochondrial intermembrane" evidence="2">
    <location>
        <begin position="303"/>
        <end position="381"/>
    </location>
</feature>
<feature type="transmembrane region" description="Helical" evidence="2">
    <location>
        <begin position="382"/>
        <end position="402"/>
    </location>
</feature>
<feature type="topological domain" description="Mitochondrial matrix" evidence="2">
    <location>
        <begin position="403"/>
        <end position="423"/>
    </location>
</feature>
<feature type="transmembrane region" description="Helical" evidence="2">
    <location>
        <begin position="424"/>
        <end position="444"/>
    </location>
</feature>
<feature type="topological domain" description="Mitochondrial intermembrane" evidence="2">
    <location>
        <begin position="445"/>
        <end position="447"/>
    </location>
</feature>
<feature type="coiled-coil region" evidence="2">
    <location>
        <begin position="74"/>
        <end position="196"/>
    </location>
</feature>
<name>SHE9_EREGS</name>
<keyword id="KW-0175">Coiled coil</keyword>
<keyword id="KW-0472">Membrane</keyword>
<keyword id="KW-0496">Mitochondrion</keyword>
<keyword id="KW-0999">Mitochondrion inner membrane</keyword>
<keyword id="KW-1185">Reference proteome</keyword>
<keyword id="KW-0809">Transit peptide</keyword>
<keyword id="KW-0812">Transmembrane</keyword>
<keyword id="KW-1133">Transmembrane helix</keyword>
<reference key="1">
    <citation type="journal article" date="2004" name="Science">
        <title>The Ashbya gossypii genome as a tool for mapping the ancient Saccharomyces cerevisiae genome.</title>
        <authorList>
            <person name="Dietrich F.S."/>
            <person name="Voegeli S."/>
            <person name="Brachat S."/>
            <person name="Lerch A."/>
            <person name="Gates K."/>
            <person name="Steiner S."/>
            <person name="Mohr C."/>
            <person name="Poehlmann R."/>
            <person name="Luedi P."/>
            <person name="Choi S."/>
            <person name="Wing R.A."/>
            <person name="Flavier A."/>
            <person name="Gaffney T.D."/>
            <person name="Philippsen P."/>
        </authorList>
    </citation>
    <scope>NUCLEOTIDE SEQUENCE [LARGE SCALE GENOMIC DNA]</scope>
    <source>
        <strain>ATCC 10895 / CBS 109.51 / FGSC 9923 / NRRL Y-1056</strain>
    </source>
</reference>
<reference key="2">
    <citation type="journal article" date="2013" name="G3 (Bethesda)">
        <title>Genomes of Ashbya fungi isolated from insects reveal four mating-type loci, numerous translocations, lack of transposons, and distinct gene duplications.</title>
        <authorList>
            <person name="Dietrich F.S."/>
            <person name="Voegeli S."/>
            <person name="Kuo S."/>
            <person name="Philippsen P."/>
        </authorList>
    </citation>
    <scope>GENOME REANNOTATION</scope>
    <source>
        <strain>ATCC 10895 / CBS 109.51 / FGSC 9923 / NRRL Y-1056</strain>
    </source>
</reference>